<protein>
    <recommendedName>
        <fullName evidence="1">Orotidine 5'-phosphate decarboxylase</fullName>
        <ecNumber evidence="1">4.1.1.23</ecNumber>
    </recommendedName>
    <alternativeName>
        <fullName evidence="1">OMP decarboxylase</fullName>
        <shortName evidence="1">OMPDCase</shortName>
        <shortName evidence="1">OMPdecase</shortName>
    </alternativeName>
</protein>
<sequence length="273" mass="29363">MTFLKKLEHAWSASQSLLQVGLDPDPKRFPRELEGKPDAIFQFCRDIVDATAPYACSFKPQIAYFAAHRAEDQLEALCQHIRAQHPDLPIVLDAKRGDIGSTAENYAREAFERYQAHALTVSPYMGLDSVEPYLAWGDRGVIVLCRTSNPGGSDLQFLKMADGQPLYLHVAGLVADKWNANGQCGLVVGATFPNELAAVRQRIGDAVPLLVPGIGAQGGDINATVQAGANSAGAGMMINSSRAILYASTGEDWRQAAGEAARGLRDAINAVRT</sequence>
<name>PYRF_BORPA</name>
<proteinExistence type="inferred from homology"/>
<evidence type="ECO:0000255" key="1">
    <source>
        <dbReference type="HAMAP-Rule" id="MF_01215"/>
    </source>
</evidence>
<gene>
    <name evidence="1" type="primary">pyrF</name>
    <name type="ordered locus">BPP0863</name>
</gene>
<reference key="1">
    <citation type="journal article" date="2003" name="Nat. Genet.">
        <title>Comparative analysis of the genome sequences of Bordetella pertussis, Bordetella parapertussis and Bordetella bronchiseptica.</title>
        <authorList>
            <person name="Parkhill J."/>
            <person name="Sebaihia M."/>
            <person name="Preston A."/>
            <person name="Murphy L.D."/>
            <person name="Thomson N.R."/>
            <person name="Harris D.E."/>
            <person name="Holden M.T.G."/>
            <person name="Churcher C.M."/>
            <person name="Bentley S.D."/>
            <person name="Mungall K.L."/>
            <person name="Cerdeno-Tarraga A.-M."/>
            <person name="Temple L."/>
            <person name="James K.D."/>
            <person name="Harris B."/>
            <person name="Quail M.A."/>
            <person name="Achtman M."/>
            <person name="Atkin R."/>
            <person name="Baker S."/>
            <person name="Basham D."/>
            <person name="Bason N."/>
            <person name="Cherevach I."/>
            <person name="Chillingworth T."/>
            <person name="Collins M."/>
            <person name="Cronin A."/>
            <person name="Davis P."/>
            <person name="Doggett J."/>
            <person name="Feltwell T."/>
            <person name="Goble A."/>
            <person name="Hamlin N."/>
            <person name="Hauser H."/>
            <person name="Holroyd S."/>
            <person name="Jagels K."/>
            <person name="Leather S."/>
            <person name="Moule S."/>
            <person name="Norberczak H."/>
            <person name="O'Neil S."/>
            <person name="Ormond D."/>
            <person name="Price C."/>
            <person name="Rabbinowitsch E."/>
            <person name="Rutter S."/>
            <person name="Sanders M."/>
            <person name="Saunders D."/>
            <person name="Seeger K."/>
            <person name="Sharp S."/>
            <person name="Simmonds M."/>
            <person name="Skelton J."/>
            <person name="Squares R."/>
            <person name="Squares S."/>
            <person name="Stevens K."/>
            <person name="Unwin L."/>
            <person name="Whitehead S."/>
            <person name="Barrell B.G."/>
            <person name="Maskell D.J."/>
        </authorList>
    </citation>
    <scope>NUCLEOTIDE SEQUENCE [LARGE SCALE GENOMIC DNA]</scope>
    <source>
        <strain>12822 / ATCC BAA-587 / NCTC 13253</strain>
    </source>
</reference>
<keyword id="KW-0210">Decarboxylase</keyword>
<keyword id="KW-0456">Lyase</keyword>
<keyword id="KW-0665">Pyrimidine biosynthesis</keyword>
<dbReference type="EC" id="4.1.1.23" evidence="1"/>
<dbReference type="EMBL" id="BX640425">
    <property type="protein sequence ID" value="CAE40272.1"/>
    <property type="molecule type" value="Genomic_DNA"/>
</dbReference>
<dbReference type="RefSeq" id="WP_003808606.1">
    <property type="nucleotide sequence ID" value="NC_002928.3"/>
</dbReference>
<dbReference type="SMR" id="Q7W138"/>
<dbReference type="GeneID" id="93202613"/>
<dbReference type="KEGG" id="bpa:BPP0863"/>
<dbReference type="HOGENOM" id="CLU_060704_1_0_4"/>
<dbReference type="UniPathway" id="UPA00070">
    <property type="reaction ID" value="UER00120"/>
</dbReference>
<dbReference type="Proteomes" id="UP000001421">
    <property type="component" value="Chromosome"/>
</dbReference>
<dbReference type="GO" id="GO:0004590">
    <property type="term" value="F:orotidine-5'-phosphate decarboxylase activity"/>
    <property type="evidence" value="ECO:0007669"/>
    <property type="project" value="UniProtKB-UniRule"/>
</dbReference>
<dbReference type="GO" id="GO:0006207">
    <property type="term" value="P:'de novo' pyrimidine nucleobase biosynthetic process"/>
    <property type="evidence" value="ECO:0007669"/>
    <property type="project" value="InterPro"/>
</dbReference>
<dbReference type="GO" id="GO:0044205">
    <property type="term" value="P:'de novo' UMP biosynthetic process"/>
    <property type="evidence" value="ECO:0007669"/>
    <property type="project" value="UniProtKB-UniRule"/>
</dbReference>
<dbReference type="CDD" id="cd04725">
    <property type="entry name" value="OMP_decarboxylase_like"/>
    <property type="match status" value="1"/>
</dbReference>
<dbReference type="Gene3D" id="3.20.20.70">
    <property type="entry name" value="Aldolase class I"/>
    <property type="match status" value="1"/>
</dbReference>
<dbReference type="HAMAP" id="MF_01215">
    <property type="entry name" value="OMPdecase_type2"/>
    <property type="match status" value="1"/>
</dbReference>
<dbReference type="InterPro" id="IPR013785">
    <property type="entry name" value="Aldolase_TIM"/>
</dbReference>
<dbReference type="InterPro" id="IPR018089">
    <property type="entry name" value="OMPdecase_AS"/>
</dbReference>
<dbReference type="InterPro" id="IPR011995">
    <property type="entry name" value="OMPdecase_type-2"/>
</dbReference>
<dbReference type="InterPro" id="IPR001754">
    <property type="entry name" value="OMPdeCOase_dom"/>
</dbReference>
<dbReference type="InterPro" id="IPR011060">
    <property type="entry name" value="RibuloseP-bd_barrel"/>
</dbReference>
<dbReference type="NCBIfam" id="TIGR02127">
    <property type="entry name" value="pyrF_sub2"/>
    <property type="match status" value="1"/>
</dbReference>
<dbReference type="PANTHER" id="PTHR43375">
    <property type="entry name" value="OROTIDINE 5'-PHOSPHATE DECARBOXYLASE"/>
    <property type="match status" value="1"/>
</dbReference>
<dbReference type="PANTHER" id="PTHR43375:SF1">
    <property type="entry name" value="OROTIDINE 5'-PHOSPHATE DECARBOXYLASE"/>
    <property type="match status" value="1"/>
</dbReference>
<dbReference type="Pfam" id="PF00215">
    <property type="entry name" value="OMPdecase"/>
    <property type="match status" value="1"/>
</dbReference>
<dbReference type="SMART" id="SM00934">
    <property type="entry name" value="OMPdecase"/>
    <property type="match status" value="1"/>
</dbReference>
<dbReference type="SUPFAM" id="SSF51366">
    <property type="entry name" value="Ribulose-phoshate binding barrel"/>
    <property type="match status" value="1"/>
</dbReference>
<dbReference type="PROSITE" id="PS00156">
    <property type="entry name" value="OMPDECASE"/>
    <property type="match status" value="1"/>
</dbReference>
<comment type="catalytic activity">
    <reaction evidence="1">
        <text>orotidine 5'-phosphate + H(+) = UMP + CO2</text>
        <dbReference type="Rhea" id="RHEA:11596"/>
        <dbReference type="ChEBI" id="CHEBI:15378"/>
        <dbReference type="ChEBI" id="CHEBI:16526"/>
        <dbReference type="ChEBI" id="CHEBI:57538"/>
        <dbReference type="ChEBI" id="CHEBI:57865"/>
        <dbReference type="EC" id="4.1.1.23"/>
    </reaction>
</comment>
<comment type="pathway">
    <text evidence="1">Pyrimidine metabolism; UMP biosynthesis via de novo pathway; UMP from orotate: step 2/2.</text>
</comment>
<comment type="similarity">
    <text evidence="1">Belongs to the OMP decarboxylase family. Type 2 subfamily.</text>
</comment>
<organism>
    <name type="scientific">Bordetella parapertussis (strain 12822 / ATCC BAA-587 / NCTC 13253)</name>
    <dbReference type="NCBI Taxonomy" id="257311"/>
    <lineage>
        <taxon>Bacteria</taxon>
        <taxon>Pseudomonadati</taxon>
        <taxon>Pseudomonadota</taxon>
        <taxon>Betaproteobacteria</taxon>
        <taxon>Burkholderiales</taxon>
        <taxon>Alcaligenaceae</taxon>
        <taxon>Bordetella</taxon>
    </lineage>
</organism>
<accession>Q7W138</accession>
<feature type="chain" id="PRO_1000066458" description="Orotidine 5'-phosphate decarboxylase">
    <location>
        <begin position="1"/>
        <end position="273"/>
    </location>
</feature>
<feature type="active site" description="Proton donor" evidence="1">
    <location>
        <position position="95"/>
    </location>
</feature>